<accession>C1CMP5</accession>
<protein>
    <recommendedName>
        <fullName evidence="1">Protein RecA</fullName>
    </recommendedName>
    <alternativeName>
        <fullName evidence="1">Recombinase A</fullName>
    </alternativeName>
</protein>
<comment type="function">
    <text evidence="1">Can catalyze the hydrolysis of ATP in the presence of single-stranded DNA, the ATP-dependent uptake of single-stranded DNA by duplex DNA, and the ATP-dependent hybridization of homologous single-stranded DNAs. It interacts with LexA causing its activation and leading to its autocatalytic cleavage.</text>
</comment>
<comment type="subcellular location">
    <subcellularLocation>
        <location evidence="1">Cytoplasm</location>
    </subcellularLocation>
</comment>
<comment type="similarity">
    <text evidence="1">Belongs to the RecA family.</text>
</comment>
<gene>
    <name evidence="1" type="primary">recA</name>
    <name type="ordered locus">SPP_1968</name>
</gene>
<feature type="chain" id="PRO_1000193333" description="Protein RecA">
    <location>
        <begin position="1"/>
        <end position="388"/>
    </location>
</feature>
<feature type="region of interest" description="Disordered" evidence="2">
    <location>
        <begin position="347"/>
        <end position="372"/>
    </location>
</feature>
<feature type="compositionally biased region" description="Basic and acidic residues" evidence="2">
    <location>
        <begin position="357"/>
        <end position="369"/>
    </location>
</feature>
<feature type="binding site" evidence="1">
    <location>
        <begin position="79"/>
        <end position="86"/>
    </location>
    <ligand>
        <name>ATP</name>
        <dbReference type="ChEBI" id="CHEBI:30616"/>
    </ligand>
</feature>
<evidence type="ECO:0000255" key="1">
    <source>
        <dbReference type="HAMAP-Rule" id="MF_00268"/>
    </source>
</evidence>
<evidence type="ECO:0000256" key="2">
    <source>
        <dbReference type="SAM" id="MobiDB-lite"/>
    </source>
</evidence>
<reference key="1">
    <citation type="journal article" date="2010" name="Genome Biol.">
        <title>Structure and dynamics of the pan-genome of Streptococcus pneumoniae and closely related species.</title>
        <authorList>
            <person name="Donati C."/>
            <person name="Hiller N.L."/>
            <person name="Tettelin H."/>
            <person name="Muzzi A."/>
            <person name="Croucher N.J."/>
            <person name="Angiuoli S.V."/>
            <person name="Oggioni M."/>
            <person name="Dunning Hotopp J.C."/>
            <person name="Hu F.Z."/>
            <person name="Riley D.R."/>
            <person name="Covacci A."/>
            <person name="Mitchell T.J."/>
            <person name="Bentley S.D."/>
            <person name="Kilian M."/>
            <person name="Ehrlich G.D."/>
            <person name="Rappuoli R."/>
            <person name="Moxon E.R."/>
            <person name="Masignani V."/>
        </authorList>
    </citation>
    <scope>NUCLEOTIDE SEQUENCE [LARGE SCALE GENOMIC DNA]</scope>
    <source>
        <strain>P1031</strain>
    </source>
</reference>
<proteinExistence type="inferred from homology"/>
<dbReference type="EMBL" id="CP000920">
    <property type="protein sequence ID" value="ACO20176.1"/>
    <property type="molecule type" value="Genomic_DNA"/>
</dbReference>
<dbReference type="RefSeq" id="WP_001085463.1">
    <property type="nucleotide sequence ID" value="NC_012467.1"/>
</dbReference>
<dbReference type="SMR" id="C1CMP5"/>
<dbReference type="KEGG" id="spp:SPP_1968"/>
<dbReference type="HOGENOM" id="CLU_040469_3_2_9"/>
<dbReference type="GO" id="GO:0005829">
    <property type="term" value="C:cytosol"/>
    <property type="evidence" value="ECO:0007669"/>
    <property type="project" value="TreeGrafter"/>
</dbReference>
<dbReference type="GO" id="GO:0005524">
    <property type="term" value="F:ATP binding"/>
    <property type="evidence" value="ECO:0007669"/>
    <property type="project" value="UniProtKB-UniRule"/>
</dbReference>
<dbReference type="GO" id="GO:0016887">
    <property type="term" value="F:ATP hydrolysis activity"/>
    <property type="evidence" value="ECO:0007669"/>
    <property type="project" value="InterPro"/>
</dbReference>
<dbReference type="GO" id="GO:0140664">
    <property type="term" value="F:ATP-dependent DNA damage sensor activity"/>
    <property type="evidence" value="ECO:0007669"/>
    <property type="project" value="InterPro"/>
</dbReference>
<dbReference type="GO" id="GO:0003684">
    <property type="term" value="F:damaged DNA binding"/>
    <property type="evidence" value="ECO:0007669"/>
    <property type="project" value="UniProtKB-UniRule"/>
</dbReference>
<dbReference type="GO" id="GO:0003697">
    <property type="term" value="F:single-stranded DNA binding"/>
    <property type="evidence" value="ECO:0007669"/>
    <property type="project" value="UniProtKB-UniRule"/>
</dbReference>
<dbReference type="GO" id="GO:0006310">
    <property type="term" value="P:DNA recombination"/>
    <property type="evidence" value="ECO:0007669"/>
    <property type="project" value="UniProtKB-UniRule"/>
</dbReference>
<dbReference type="GO" id="GO:0006281">
    <property type="term" value="P:DNA repair"/>
    <property type="evidence" value="ECO:0007669"/>
    <property type="project" value="UniProtKB-UniRule"/>
</dbReference>
<dbReference type="GO" id="GO:0009432">
    <property type="term" value="P:SOS response"/>
    <property type="evidence" value="ECO:0007669"/>
    <property type="project" value="UniProtKB-UniRule"/>
</dbReference>
<dbReference type="CDD" id="cd00983">
    <property type="entry name" value="RecA"/>
    <property type="match status" value="1"/>
</dbReference>
<dbReference type="FunFam" id="3.40.50.300:FF:000087">
    <property type="entry name" value="Recombinase RecA"/>
    <property type="match status" value="1"/>
</dbReference>
<dbReference type="Gene3D" id="3.40.50.300">
    <property type="entry name" value="P-loop containing nucleotide triphosphate hydrolases"/>
    <property type="match status" value="1"/>
</dbReference>
<dbReference type="HAMAP" id="MF_00268">
    <property type="entry name" value="RecA"/>
    <property type="match status" value="1"/>
</dbReference>
<dbReference type="InterPro" id="IPR003593">
    <property type="entry name" value="AAA+_ATPase"/>
</dbReference>
<dbReference type="InterPro" id="IPR013765">
    <property type="entry name" value="DNA_recomb/repair_RecA"/>
</dbReference>
<dbReference type="InterPro" id="IPR020584">
    <property type="entry name" value="DNA_recomb/repair_RecA_CS"/>
</dbReference>
<dbReference type="InterPro" id="IPR027417">
    <property type="entry name" value="P-loop_NTPase"/>
</dbReference>
<dbReference type="InterPro" id="IPR049261">
    <property type="entry name" value="RecA-like_C"/>
</dbReference>
<dbReference type="InterPro" id="IPR049428">
    <property type="entry name" value="RecA-like_N"/>
</dbReference>
<dbReference type="InterPro" id="IPR020588">
    <property type="entry name" value="RecA_ATP-bd"/>
</dbReference>
<dbReference type="InterPro" id="IPR023400">
    <property type="entry name" value="RecA_C_sf"/>
</dbReference>
<dbReference type="InterPro" id="IPR020587">
    <property type="entry name" value="RecA_monomer-monomer_interface"/>
</dbReference>
<dbReference type="NCBIfam" id="TIGR02012">
    <property type="entry name" value="tigrfam_recA"/>
    <property type="match status" value="1"/>
</dbReference>
<dbReference type="PANTHER" id="PTHR45900:SF1">
    <property type="entry name" value="MITOCHONDRIAL DNA REPAIR PROTEIN RECA HOMOLOG-RELATED"/>
    <property type="match status" value="1"/>
</dbReference>
<dbReference type="PANTHER" id="PTHR45900">
    <property type="entry name" value="RECA"/>
    <property type="match status" value="1"/>
</dbReference>
<dbReference type="Pfam" id="PF00154">
    <property type="entry name" value="RecA"/>
    <property type="match status" value="1"/>
</dbReference>
<dbReference type="Pfam" id="PF21096">
    <property type="entry name" value="RecA_C"/>
    <property type="match status" value="1"/>
</dbReference>
<dbReference type="PRINTS" id="PR00142">
    <property type="entry name" value="RECA"/>
</dbReference>
<dbReference type="SMART" id="SM00382">
    <property type="entry name" value="AAA"/>
    <property type="match status" value="1"/>
</dbReference>
<dbReference type="SUPFAM" id="SSF52540">
    <property type="entry name" value="P-loop containing nucleoside triphosphate hydrolases"/>
    <property type="match status" value="1"/>
</dbReference>
<dbReference type="SUPFAM" id="SSF54752">
    <property type="entry name" value="RecA protein, C-terminal domain"/>
    <property type="match status" value="1"/>
</dbReference>
<dbReference type="PROSITE" id="PS00321">
    <property type="entry name" value="RECA_1"/>
    <property type="match status" value="1"/>
</dbReference>
<dbReference type="PROSITE" id="PS50162">
    <property type="entry name" value="RECA_2"/>
    <property type="match status" value="1"/>
</dbReference>
<dbReference type="PROSITE" id="PS50163">
    <property type="entry name" value="RECA_3"/>
    <property type="match status" value="1"/>
</dbReference>
<sequence>MAKKPKKLEEISKKFGAEREKALNDALKLIEKDFGKGSIMRLGERAEQKVQVMSSGSLALDIALGSGGYPKGRIIEIYGPESSGKTTVALHAVAQAQKEGGIAAFIDAEHALDPAYAAALGVNIDELLLSQPDSGEQGLEIAGKLIDSGAVDLVVVDSVAALVPRAEIDGDIGDSHVGLQARMMSQAMRKLGASINKTKTIAIFINQLREKVGVMFGNPETTPGGRALKFYASVRLDVRGNTQIKGTGDQKETNVGKETKIKVVKNKVAPPFKEAVVEIMYGEGISKTGELLKIASDLDIIKKAGAWYSYKDEKIGQGSENAKKYLAEHPEIFDEIDKQVRSKFGLIDGEEVSEQDTENKKDEPKKEEAVNEEVTLDLGDELEIEIEE</sequence>
<name>RECA_STRZP</name>
<organism>
    <name type="scientific">Streptococcus pneumoniae (strain P1031)</name>
    <dbReference type="NCBI Taxonomy" id="488223"/>
    <lineage>
        <taxon>Bacteria</taxon>
        <taxon>Bacillati</taxon>
        <taxon>Bacillota</taxon>
        <taxon>Bacilli</taxon>
        <taxon>Lactobacillales</taxon>
        <taxon>Streptococcaceae</taxon>
        <taxon>Streptococcus</taxon>
    </lineage>
</organism>
<keyword id="KW-0067">ATP-binding</keyword>
<keyword id="KW-0963">Cytoplasm</keyword>
<keyword id="KW-0227">DNA damage</keyword>
<keyword id="KW-0233">DNA recombination</keyword>
<keyword id="KW-0234">DNA repair</keyword>
<keyword id="KW-0238">DNA-binding</keyword>
<keyword id="KW-0547">Nucleotide-binding</keyword>
<keyword id="KW-0742">SOS response</keyword>